<organism>
    <name type="scientific">Homo sapiens</name>
    <name type="common">Human</name>
    <dbReference type="NCBI Taxonomy" id="9606"/>
    <lineage>
        <taxon>Eukaryota</taxon>
        <taxon>Metazoa</taxon>
        <taxon>Chordata</taxon>
        <taxon>Craniata</taxon>
        <taxon>Vertebrata</taxon>
        <taxon>Euteleostomi</taxon>
        <taxon>Mammalia</taxon>
        <taxon>Eutheria</taxon>
        <taxon>Euarchontoglires</taxon>
        <taxon>Primates</taxon>
        <taxon>Haplorrhini</taxon>
        <taxon>Catarrhini</taxon>
        <taxon>Hominidae</taxon>
        <taxon>Homo</taxon>
    </lineage>
</organism>
<gene>
    <name type="ORF">UNQ6493/PRO21345</name>
</gene>
<protein>
    <recommendedName>
        <fullName>Putative uncharacterized protein UNQ6493/PRO21345</fullName>
    </recommendedName>
</protein>
<reference key="1">
    <citation type="journal article" date="2003" name="Genome Res.">
        <title>The secreted protein discovery initiative (SPDI), a large-scale effort to identify novel human secreted and transmembrane proteins: a bioinformatics assessment.</title>
        <authorList>
            <person name="Clark H.F."/>
            <person name="Gurney A.L."/>
            <person name="Abaya E."/>
            <person name="Baker K."/>
            <person name="Baldwin D.T."/>
            <person name="Brush J."/>
            <person name="Chen J."/>
            <person name="Chow B."/>
            <person name="Chui C."/>
            <person name="Crowley C."/>
            <person name="Currell B."/>
            <person name="Deuel B."/>
            <person name="Dowd P."/>
            <person name="Eaton D."/>
            <person name="Foster J.S."/>
            <person name="Grimaldi C."/>
            <person name="Gu Q."/>
            <person name="Hass P.E."/>
            <person name="Heldens S."/>
            <person name="Huang A."/>
            <person name="Kim H.S."/>
            <person name="Klimowski L."/>
            <person name="Jin Y."/>
            <person name="Johnson S."/>
            <person name="Lee J."/>
            <person name="Lewis L."/>
            <person name="Liao D."/>
            <person name="Mark M.R."/>
            <person name="Robbie E."/>
            <person name="Sanchez C."/>
            <person name="Schoenfeld J."/>
            <person name="Seshagiri S."/>
            <person name="Simmons L."/>
            <person name="Singh J."/>
            <person name="Smith V."/>
            <person name="Stinson J."/>
            <person name="Vagts A."/>
            <person name="Vandlen R.L."/>
            <person name="Watanabe C."/>
            <person name="Wieand D."/>
            <person name="Woods K."/>
            <person name="Xie M.-H."/>
            <person name="Yansura D.G."/>
            <person name="Yi S."/>
            <person name="Yu G."/>
            <person name="Yuan J."/>
            <person name="Zhang M."/>
            <person name="Zhang Z."/>
            <person name="Goddard A.D."/>
            <person name="Wood W.I."/>
            <person name="Godowski P.J."/>
            <person name="Gray A.M."/>
        </authorList>
    </citation>
    <scope>NUCLEOTIDE SEQUENCE [LARGE SCALE MRNA]</scope>
</reference>
<feature type="chain" id="PRO_0000317729" description="Putative uncharacterized protein UNQ6493/PRO21345">
    <location>
        <begin position="1"/>
        <end position="122"/>
    </location>
</feature>
<sequence length="122" mass="12794">MEPWWPRGTGANAPWVLVAVPPGLFPSLLGACCTLTSSSWLQPRFWGLGWRVEVGLEGAGGSSQNYQAALPSFFCLAASPASRPAIFGILAAEPPSASPQAPWPKPGCASPHGSHWPSILIC</sequence>
<evidence type="ECO:0000305" key="1"/>
<comment type="caution">
    <text evidence="1">Product of a dubious CDS prediction.</text>
</comment>
<accession>Q6UXR8</accession>
<name>YS001_HUMAN</name>
<dbReference type="EMBL" id="AY358234">
    <property type="protein sequence ID" value="AAQ88601.1"/>
    <property type="molecule type" value="mRNA"/>
</dbReference>
<dbReference type="BioMuta" id="UNQ6493/PRO21345"/>
<dbReference type="TopDownProteomics" id="Q6UXR8"/>
<dbReference type="neXtProt" id="NX_Q6UXR8"/>
<dbReference type="InParanoid" id="Q6UXR8"/>
<dbReference type="PAN-GO" id="Q6UXR8">
    <property type="GO annotations" value="0 GO annotations based on evolutionary models"/>
</dbReference>
<dbReference type="Pharos" id="Q6UXR8">
    <property type="development level" value="Tdark"/>
</dbReference>
<dbReference type="Proteomes" id="UP000005640">
    <property type="component" value="Unplaced"/>
</dbReference>
<dbReference type="RNAct" id="Q6UXR8">
    <property type="molecule type" value="protein"/>
</dbReference>
<keyword id="KW-1185">Reference proteome</keyword>
<proteinExistence type="uncertain"/>